<sequence>MFDNILEQQRIEKAKELKNLGINPYPHFLEKEMSLKTFKDRFSYILEQVEKRDESVNAVVAGRLKLLRIAGKSIFANIEDEDTNLQIYFSKDSVGEELYTILKKNLEVGDIVLVKGFPFVTKTGEFSLHASEVKLATKAIVPLPEKYHGLTDIEQRYRKRYVDMIMNAEVRKDFLVRSKVVSLIRHFFENKGFLEVETPMMHPIAGGANAKPFVTFHNSLGVERFLRIAPELYLKRLVVGGFEAVFEINRCFRNEGMDLTHNPEFTTIEFYWAYHNYKDLMDLTEELFALLLDKLNLGKTIEFDGKMIDFSKPFERITYKDALCKYGGLDRDLIEDKEKILTKLKADGFEANEKLELGHLQAELFDNYVEEKLINPTFVIDFPISISPLSRRSDEDSQIAERFELFICGRELANGFNELNDPLDQYERFLKQIEAKNAGDEEACEMDEDFVNALGYGMPPTAGQGIGIDRLVMLLTNKKSIRDVILFPAMRPLKSELKEKE</sequence>
<accession>Q5HW66</accession>
<reference key="1">
    <citation type="journal article" date="2005" name="PLoS Biol.">
        <title>Major structural differences and novel potential virulence mechanisms from the genomes of multiple Campylobacter species.</title>
        <authorList>
            <person name="Fouts D.E."/>
            <person name="Mongodin E.F."/>
            <person name="Mandrell R.E."/>
            <person name="Miller W.G."/>
            <person name="Rasko D.A."/>
            <person name="Ravel J."/>
            <person name="Brinkac L.M."/>
            <person name="DeBoy R.T."/>
            <person name="Parker C.T."/>
            <person name="Daugherty S.C."/>
            <person name="Dodson R.J."/>
            <person name="Durkin A.S."/>
            <person name="Madupu R."/>
            <person name="Sullivan S.A."/>
            <person name="Shetty J.U."/>
            <person name="Ayodeji M.A."/>
            <person name="Shvartsbeyn A."/>
            <person name="Schatz M.C."/>
            <person name="Badger J.H."/>
            <person name="Fraser C.M."/>
            <person name="Nelson K.E."/>
        </authorList>
    </citation>
    <scope>NUCLEOTIDE SEQUENCE [LARGE SCALE GENOMIC DNA]</scope>
    <source>
        <strain>RM1221</strain>
    </source>
</reference>
<proteinExistence type="inferred from homology"/>
<feature type="chain" id="PRO_1000012864" description="Lysine--tRNA ligase">
    <location>
        <begin position="1"/>
        <end position="501"/>
    </location>
</feature>
<feature type="binding site" evidence="1">
    <location>
        <position position="404"/>
    </location>
    <ligand>
        <name>Mg(2+)</name>
        <dbReference type="ChEBI" id="CHEBI:18420"/>
        <label>1</label>
    </ligand>
</feature>
<feature type="binding site" evidence="1">
    <location>
        <position position="411"/>
    </location>
    <ligand>
        <name>Mg(2+)</name>
        <dbReference type="ChEBI" id="CHEBI:18420"/>
        <label>1</label>
    </ligand>
</feature>
<feature type="binding site" evidence="1">
    <location>
        <position position="411"/>
    </location>
    <ligand>
        <name>Mg(2+)</name>
        <dbReference type="ChEBI" id="CHEBI:18420"/>
        <label>2</label>
    </ligand>
</feature>
<evidence type="ECO:0000255" key="1">
    <source>
        <dbReference type="HAMAP-Rule" id="MF_00252"/>
    </source>
</evidence>
<dbReference type="EC" id="6.1.1.6" evidence="1"/>
<dbReference type="EMBL" id="CP000025">
    <property type="protein sequence ID" value="AAW35039.1"/>
    <property type="molecule type" value="Genomic_DNA"/>
</dbReference>
<dbReference type="RefSeq" id="WP_002867786.1">
    <property type="nucleotide sequence ID" value="NC_003912.7"/>
</dbReference>
<dbReference type="SMR" id="Q5HW66"/>
<dbReference type="KEGG" id="cjr:CJE0450"/>
<dbReference type="HOGENOM" id="CLU_008255_6_0_7"/>
<dbReference type="GO" id="GO:0005829">
    <property type="term" value="C:cytosol"/>
    <property type="evidence" value="ECO:0007669"/>
    <property type="project" value="TreeGrafter"/>
</dbReference>
<dbReference type="GO" id="GO:0005524">
    <property type="term" value="F:ATP binding"/>
    <property type="evidence" value="ECO:0007669"/>
    <property type="project" value="UniProtKB-UniRule"/>
</dbReference>
<dbReference type="GO" id="GO:0004824">
    <property type="term" value="F:lysine-tRNA ligase activity"/>
    <property type="evidence" value="ECO:0007669"/>
    <property type="project" value="UniProtKB-UniRule"/>
</dbReference>
<dbReference type="GO" id="GO:0000287">
    <property type="term" value="F:magnesium ion binding"/>
    <property type="evidence" value="ECO:0007669"/>
    <property type="project" value="UniProtKB-UniRule"/>
</dbReference>
<dbReference type="GO" id="GO:0000049">
    <property type="term" value="F:tRNA binding"/>
    <property type="evidence" value="ECO:0007669"/>
    <property type="project" value="TreeGrafter"/>
</dbReference>
<dbReference type="GO" id="GO:0006430">
    <property type="term" value="P:lysyl-tRNA aminoacylation"/>
    <property type="evidence" value="ECO:0007669"/>
    <property type="project" value="UniProtKB-UniRule"/>
</dbReference>
<dbReference type="CDD" id="cd00775">
    <property type="entry name" value="LysRS_core"/>
    <property type="match status" value="1"/>
</dbReference>
<dbReference type="CDD" id="cd04322">
    <property type="entry name" value="LysRS_N"/>
    <property type="match status" value="1"/>
</dbReference>
<dbReference type="Gene3D" id="3.30.930.10">
    <property type="entry name" value="Bira Bifunctional Protein, Domain 2"/>
    <property type="match status" value="1"/>
</dbReference>
<dbReference type="Gene3D" id="2.40.50.140">
    <property type="entry name" value="Nucleic acid-binding proteins"/>
    <property type="match status" value="1"/>
</dbReference>
<dbReference type="HAMAP" id="MF_00252">
    <property type="entry name" value="Lys_tRNA_synth_class2"/>
    <property type="match status" value="1"/>
</dbReference>
<dbReference type="InterPro" id="IPR004364">
    <property type="entry name" value="Aa-tRNA-synt_II"/>
</dbReference>
<dbReference type="InterPro" id="IPR006195">
    <property type="entry name" value="aa-tRNA-synth_II"/>
</dbReference>
<dbReference type="InterPro" id="IPR045864">
    <property type="entry name" value="aa-tRNA-synth_II/BPL/LPL"/>
</dbReference>
<dbReference type="InterPro" id="IPR002313">
    <property type="entry name" value="Lys-tRNA-ligase_II"/>
</dbReference>
<dbReference type="InterPro" id="IPR044136">
    <property type="entry name" value="Lys-tRNA-ligase_II_N"/>
</dbReference>
<dbReference type="InterPro" id="IPR018149">
    <property type="entry name" value="Lys-tRNA-synth_II_C"/>
</dbReference>
<dbReference type="InterPro" id="IPR012340">
    <property type="entry name" value="NA-bd_OB-fold"/>
</dbReference>
<dbReference type="InterPro" id="IPR004365">
    <property type="entry name" value="NA-bd_OB_tRNA"/>
</dbReference>
<dbReference type="NCBIfam" id="TIGR00499">
    <property type="entry name" value="lysS_bact"/>
    <property type="match status" value="1"/>
</dbReference>
<dbReference type="NCBIfam" id="NF001756">
    <property type="entry name" value="PRK00484.1"/>
    <property type="match status" value="1"/>
</dbReference>
<dbReference type="PANTHER" id="PTHR42918:SF15">
    <property type="entry name" value="LYSINE--TRNA LIGASE, CHLOROPLASTIC_MITOCHONDRIAL"/>
    <property type="match status" value="1"/>
</dbReference>
<dbReference type="PANTHER" id="PTHR42918">
    <property type="entry name" value="LYSYL-TRNA SYNTHETASE"/>
    <property type="match status" value="1"/>
</dbReference>
<dbReference type="Pfam" id="PF00152">
    <property type="entry name" value="tRNA-synt_2"/>
    <property type="match status" value="1"/>
</dbReference>
<dbReference type="Pfam" id="PF01336">
    <property type="entry name" value="tRNA_anti-codon"/>
    <property type="match status" value="1"/>
</dbReference>
<dbReference type="PRINTS" id="PR00982">
    <property type="entry name" value="TRNASYNTHLYS"/>
</dbReference>
<dbReference type="SUPFAM" id="SSF55681">
    <property type="entry name" value="Class II aaRS and biotin synthetases"/>
    <property type="match status" value="1"/>
</dbReference>
<dbReference type="SUPFAM" id="SSF50249">
    <property type="entry name" value="Nucleic acid-binding proteins"/>
    <property type="match status" value="1"/>
</dbReference>
<dbReference type="PROSITE" id="PS50862">
    <property type="entry name" value="AA_TRNA_LIGASE_II"/>
    <property type="match status" value="1"/>
</dbReference>
<gene>
    <name evidence="1" type="primary">lysS</name>
    <name type="ordered locus">CJE0450</name>
</gene>
<comment type="catalytic activity">
    <reaction evidence="1">
        <text>tRNA(Lys) + L-lysine + ATP = L-lysyl-tRNA(Lys) + AMP + diphosphate</text>
        <dbReference type="Rhea" id="RHEA:20792"/>
        <dbReference type="Rhea" id="RHEA-COMP:9696"/>
        <dbReference type="Rhea" id="RHEA-COMP:9697"/>
        <dbReference type="ChEBI" id="CHEBI:30616"/>
        <dbReference type="ChEBI" id="CHEBI:32551"/>
        <dbReference type="ChEBI" id="CHEBI:33019"/>
        <dbReference type="ChEBI" id="CHEBI:78442"/>
        <dbReference type="ChEBI" id="CHEBI:78529"/>
        <dbReference type="ChEBI" id="CHEBI:456215"/>
        <dbReference type="EC" id="6.1.1.6"/>
    </reaction>
</comment>
<comment type="cofactor">
    <cofactor evidence="1">
        <name>Mg(2+)</name>
        <dbReference type="ChEBI" id="CHEBI:18420"/>
    </cofactor>
    <text evidence="1">Binds 3 Mg(2+) ions per subunit.</text>
</comment>
<comment type="subunit">
    <text evidence="1">Homodimer.</text>
</comment>
<comment type="subcellular location">
    <subcellularLocation>
        <location evidence="1">Cytoplasm</location>
    </subcellularLocation>
</comment>
<comment type="similarity">
    <text evidence="1">Belongs to the class-II aminoacyl-tRNA synthetase family.</text>
</comment>
<keyword id="KW-0030">Aminoacyl-tRNA synthetase</keyword>
<keyword id="KW-0067">ATP-binding</keyword>
<keyword id="KW-0963">Cytoplasm</keyword>
<keyword id="KW-0436">Ligase</keyword>
<keyword id="KW-0460">Magnesium</keyword>
<keyword id="KW-0479">Metal-binding</keyword>
<keyword id="KW-0547">Nucleotide-binding</keyword>
<keyword id="KW-0648">Protein biosynthesis</keyword>
<organism>
    <name type="scientific">Campylobacter jejuni (strain RM1221)</name>
    <dbReference type="NCBI Taxonomy" id="195099"/>
    <lineage>
        <taxon>Bacteria</taxon>
        <taxon>Pseudomonadati</taxon>
        <taxon>Campylobacterota</taxon>
        <taxon>Epsilonproteobacteria</taxon>
        <taxon>Campylobacterales</taxon>
        <taxon>Campylobacteraceae</taxon>
        <taxon>Campylobacter</taxon>
    </lineage>
</organism>
<protein>
    <recommendedName>
        <fullName evidence="1">Lysine--tRNA ligase</fullName>
        <ecNumber evidence="1">6.1.1.6</ecNumber>
    </recommendedName>
    <alternativeName>
        <fullName evidence="1">Lysyl-tRNA synthetase</fullName>
        <shortName evidence="1">LysRS</shortName>
    </alternativeName>
</protein>
<name>SYK_CAMJR</name>